<sequence length="192" mass="21106">MVLLAFLCAAALAALARGTIPPPEEAARMARFVLHNCDWGALATLSAQEGLRGRPFANIFSISDGAPGPGGGSGVPYLYLTDMEISVQDLEVNSNASLTVSLAQTPYCKKHRYDPQNPLCAHIIFCGSIVKVNDSEAALAKKALFTRHPEMESWPKDHNWFYAKFNITNIWVLDYFGGLKIVTPEEYYNVKP</sequence>
<comment type="function">
    <text evidence="1">May contribute to the transcriptional control of cell growth and differentiation.</text>
</comment>
<comment type="subcellular location">
    <subcellularLocation>
        <location evidence="1">Secreted</location>
    </subcellularLocation>
</comment>
<comment type="similarity">
    <text evidence="3">Belongs to the CREG family.</text>
</comment>
<organism>
    <name type="scientific">Gallus gallus</name>
    <name type="common">Chicken</name>
    <dbReference type="NCBI Taxonomy" id="9031"/>
    <lineage>
        <taxon>Eukaryota</taxon>
        <taxon>Metazoa</taxon>
        <taxon>Chordata</taxon>
        <taxon>Craniata</taxon>
        <taxon>Vertebrata</taxon>
        <taxon>Euteleostomi</taxon>
        <taxon>Archelosauria</taxon>
        <taxon>Archosauria</taxon>
        <taxon>Dinosauria</taxon>
        <taxon>Saurischia</taxon>
        <taxon>Theropoda</taxon>
        <taxon>Coelurosauria</taxon>
        <taxon>Aves</taxon>
        <taxon>Neognathae</taxon>
        <taxon>Galloanserae</taxon>
        <taxon>Galliformes</taxon>
        <taxon>Phasianidae</taxon>
        <taxon>Phasianinae</taxon>
        <taxon>Gallus</taxon>
    </lineage>
</organism>
<gene>
    <name type="primary">CREG1</name>
    <name type="ORF">RCJMB04_20e8</name>
</gene>
<protein>
    <recommendedName>
        <fullName>Protein CREG1</fullName>
    </recommendedName>
</protein>
<dbReference type="EMBL" id="AJ720561">
    <property type="protein sequence ID" value="CAG32220.1"/>
    <property type="molecule type" value="mRNA"/>
</dbReference>
<dbReference type="RefSeq" id="NP_001291993.1">
    <property type="nucleotide sequence ID" value="NM_001305064.1"/>
</dbReference>
<dbReference type="SMR" id="Q5ZJ73"/>
<dbReference type="FunCoup" id="Q5ZJ73">
    <property type="interactions" value="99"/>
</dbReference>
<dbReference type="STRING" id="9031.ENSGALP00000063324"/>
<dbReference type="GlyCosmos" id="Q5ZJ73">
    <property type="glycosylation" value="3 sites, No reported glycans"/>
</dbReference>
<dbReference type="GlyGen" id="Q5ZJ73">
    <property type="glycosylation" value="3 sites"/>
</dbReference>
<dbReference type="PaxDb" id="9031-ENSGALP00000043319"/>
<dbReference type="GeneID" id="768680"/>
<dbReference type="KEGG" id="gga:768680"/>
<dbReference type="CTD" id="8804"/>
<dbReference type="VEuPathDB" id="HostDB:geneid_768680"/>
<dbReference type="eggNOG" id="KOG3374">
    <property type="taxonomic scope" value="Eukaryota"/>
</dbReference>
<dbReference type="HOGENOM" id="CLU_083635_3_1_1"/>
<dbReference type="InParanoid" id="Q5ZJ73"/>
<dbReference type="OrthoDB" id="46836at2759"/>
<dbReference type="PhylomeDB" id="Q5ZJ73"/>
<dbReference type="Reactome" id="R-GGA-6798695">
    <property type="pathway name" value="Neutrophil degranulation"/>
</dbReference>
<dbReference type="PRO" id="PR:Q5ZJ73"/>
<dbReference type="Proteomes" id="UP000000539">
    <property type="component" value="Chromosome 1"/>
</dbReference>
<dbReference type="Bgee" id="ENSGALG00000040426">
    <property type="expression patterns" value="Expressed in lung and 14 other cell types or tissues"/>
</dbReference>
<dbReference type="GO" id="GO:0005737">
    <property type="term" value="C:cytoplasm"/>
    <property type="evidence" value="ECO:0007669"/>
    <property type="project" value="UniProtKB-ARBA"/>
</dbReference>
<dbReference type="GO" id="GO:0005615">
    <property type="term" value="C:extracellular space"/>
    <property type="evidence" value="ECO:0000318"/>
    <property type="project" value="GO_Central"/>
</dbReference>
<dbReference type="GO" id="GO:0043231">
    <property type="term" value="C:intracellular membrane-bounded organelle"/>
    <property type="evidence" value="ECO:0007669"/>
    <property type="project" value="UniProtKB-ARBA"/>
</dbReference>
<dbReference type="FunFam" id="2.30.110.10:FF:000004">
    <property type="entry name" value="Cellular repressor of E1A-stimulated genes 1"/>
    <property type="match status" value="1"/>
</dbReference>
<dbReference type="Gene3D" id="2.30.110.10">
    <property type="entry name" value="Electron Transport, Fmn-binding Protein, Chain A"/>
    <property type="match status" value="1"/>
</dbReference>
<dbReference type="InterPro" id="IPR014631">
    <property type="entry name" value="CREG"/>
</dbReference>
<dbReference type="InterPro" id="IPR055343">
    <property type="entry name" value="CREG_beta-barrel"/>
</dbReference>
<dbReference type="InterPro" id="IPR012349">
    <property type="entry name" value="Split_barrel_FMN-bd"/>
</dbReference>
<dbReference type="PANTHER" id="PTHR13343">
    <property type="entry name" value="CREG1 PROTEIN"/>
    <property type="match status" value="1"/>
</dbReference>
<dbReference type="PANTHER" id="PTHR13343:SF21">
    <property type="entry name" value="PROTEIN CREG1"/>
    <property type="match status" value="1"/>
</dbReference>
<dbReference type="Pfam" id="PF13883">
    <property type="entry name" value="CREG_beta-barrel"/>
    <property type="match status" value="1"/>
</dbReference>
<dbReference type="PIRSF" id="PIRSF036911">
    <property type="entry name" value="CREG"/>
    <property type="match status" value="1"/>
</dbReference>
<dbReference type="SUPFAM" id="SSF50475">
    <property type="entry name" value="FMN-binding split barrel"/>
    <property type="match status" value="1"/>
</dbReference>
<accession>Q5ZJ73</accession>
<name>CREG1_CHICK</name>
<proteinExistence type="evidence at transcript level"/>
<evidence type="ECO:0000250" key="1"/>
<evidence type="ECO:0000255" key="2"/>
<evidence type="ECO:0000305" key="3"/>
<reference key="1">
    <citation type="journal article" date="2005" name="Genome Biol.">
        <title>Full-length cDNAs from chicken bursal lymphocytes to facilitate gene function analysis.</title>
        <authorList>
            <person name="Caldwell R.B."/>
            <person name="Kierzek A.M."/>
            <person name="Arakawa H."/>
            <person name="Bezzubov Y."/>
            <person name="Zaim J."/>
            <person name="Fiedler P."/>
            <person name="Kutter S."/>
            <person name="Blagodatski A."/>
            <person name="Kostovska D."/>
            <person name="Koter M."/>
            <person name="Plachy J."/>
            <person name="Carninci P."/>
            <person name="Hayashizaki Y."/>
            <person name="Buerstedde J.-M."/>
        </authorList>
    </citation>
    <scope>NUCLEOTIDE SEQUENCE [LARGE SCALE MRNA]</scope>
    <source>
        <strain>CB</strain>
        <tissue>Bursa of Fabricius</tissue>
    </source>
</reference>
<feature type="signal peptide" evidence="2">
    <location>
        <begin position="1"/>
        <end position="18"/>
    </location>
</feature>
<feature type="chain" id="PRO_0000006205" description="Protein CREG1">
    <location>
        <begin position="19"/>
        <end position="192"/>
    </location>
</feature>
<feature type="glycosylation site" description="N-linked (GlcNAc...) asparagine" evidence="2">
    <location>
        <position position="95"/>
    </location>
</feature>
<feature type="glycosylation site" description="N-linked (GlcNAc...) asparagine" evidence="2">
    <location>
        <position position="133"/>
    </location>
</feature>
<feature type="glycosylation site" description="N-linked (GlcNAc...) asparagine" evidence="2">
    <location>
        <position position="166"/>
    </location>
</feature>
<keyword id="KW-0325">Glycoprotein</keyword>
<keyword id="KW-0341">Growth regulation</keyword>
<keyword id="KW-1185">Reference proteome</keyword>
<keyword id="KW-0964">Secreted</keyword>
<keyword id="KW-0732">Signal</keyword>